<dbReference type="EC" id="5.4.99.62" evidence="1"/>
<dbReference type="EMBL" id="CP000076">
    <property type="protein sequence ID" value="AAY91381.1"/>
    <property type="molecule type" value="Genomic_DNA"/>
</dbReference>
<dbReference type="RefSeq" id="WP_011060411.1">
    <property type="nucleotide sequence ID" value="NC_004129.6"/>
</dbReference>
<dbReference type="SMR" id="Q4KEW9"/>
<dbReference type="STRING" id="220664.PFL_2106"/>
<dbReference type="GeneID" id="57475146"/>
<dbReference type="KEGG" id="pfl:PFL_2106"/>
<dbReference type="PATRIC" id="fig|220664.5.peg.2133"/>
<dbReference type="eggNOG" id="COG1869">
    <property type="taxonomic scope" value="Bacteria"/>
</dbReference>
<dbReference type="HOGENOM" id="CLU_135498_0_0_6"/>
<dbReference type="UniPathway" id="UPA00916">
    <property type="reaction ID" value="UER00888"/>
</dbReference>
<dbReference type="Proteomes" id="UP000008540">
    <property type="component" value="Chromosome"/>
</dbReference>
<dbReference type="GO" id="GO:0005829">
    <property type="term" value="C:cytosol"/>
    <property type="evidence" value="ECO:0007669"/>
    <property type="project" value="TreeGrafter"/>
</dbReference>
<dbReference type="GO" id="GO:0062193">
    <property type="term" value="F:D-ribose pyranase activity"/>
    <property type="evidence" value="ECO:0007669"/>
    <property type="project" value="UniProtKB-EC"/>
</dbReference>
<dbReference type="GO" id="GO:0016872">
    <property type="term" value="F:intramolecular lyase activity"/>
    <property type="evidence" value="ECO:0007669"/>
    <property type="project" value="UniProtKB-UniRule"/>
</dbReference>
<dbReference type="GO" id="GO:0048029">
    <property type="term" value="F:monosaccharide binding"/>
    <property type="evidence" value="ECO:0007669"/>
    <property type="project" value="InterPro"/>
</dbReference>
<dbReference type="GO" id="GO:0019303">
    <property type="term" value="P:D-ribose catabolic process"/>
    <property type="evidence" value="ECO:0007669"/>
    <property type="project" value="UniProtKB-UniRule"/>
</dbReference>
<dbReference type="Gene3D" id="3.40.1650.10">
    <property type="entry name" value="RbsD-like domain"/>
    <property type="match status" value="1"/>
</dbReference>
<dbReference type="HAMAP" id="MF_01661">
    <property type="entry name" value="D_rib_pyranase"/>
    <property type="match status" value="1"/>
</dbReference>
<dbReference type="InterPro" id="IPR023064">
    <property type="entry name" value="D-ribose_pyranase"/>
</dbReference>
<dbReference type="InterPro" id="IPR023750">
    <property type="entry name" value="RbsD-like_sf"/>
</dbReference>
<dbReference type="InterPro" id="IPR007721">
    <property type="entry name" value="RbsD_FucU"/>
</dbReference>
<dbReference type="NCBIfam" id="NF008761">
    <property type="entry name" value="PRK11797.1"/>
    <property type="match status" value="1"/>
</dbReference>
<dbReference type="PANTHER" id="PTHR37831">
    <property type="entry name" value="D-RIBOSE PYRANASE"/>
    <property type="match status" value="1"/>
</dbReference>
<dbReference type="PANTHER" id="PTHR37831:SF1">
    <property type="entry name" value="D-RIBOSE PYRANASE"/>
    <property type="match status" value="1"/>
</dbReference>
<dbReference type="Pfam" id="PF05025">
    <property type="entry name" value="RbsD_FucU"/>
    <property type="match status" value="1"/>
</dbReference>
<dbReference type="SUPFAM" id="SSF102546">
    <property type="entry name" value="RbsD-like"/>
    <property type="match status" value="1"/>
</dbReference>
<accession>Q4KEW9</accession>
<feature type="chain" id="PRO_0000346235" description="D-ribose pyranase">
    <location>
        <begin position="1"/>
        <end position="134"/>
    </location>
</feature>
<feature type="active site" description="Proton donor" evidence="1">
    <location>
        <position position="20"/>
    </location>
</feature>
<feature type="binding site" evidence="1">
    <location>
        <position position="28"/>
    </location>
    <ligand>
        <name>substrate</name>
    </ligand>
</feature>
<feature type="binding site" evidence="1">
    <location>
        <position position="101"/>
    </location>
    <ligand>
        <name>substrate</name>
    </ligand>
</feature>
<feature type="binding site" evidence="1">
    <location>
        <begin position="123"/>
        <end position="125"/>
    </location>
    <ligand>
        <name>substrate</name>
    </ligand>
</feature>
<organism>
    <name type="scientific">Pseudomonas fluorescens (strain ATCC BAA-477 / NRRL B-23932 / Pf-5)</name>
    <dbReference type="NCBI Taxonomy" id="220664"/>
    <lineage>
        <taxon>Bacteria</taxon>
        <taxon>Pseudomonadati</taxon>
        <taxon>Pseudomonadota</taxon>
        <taxon>Gammaproteobacteria</taxon>
        <taxon>Pseudomonadales</taxon>
        <taxon>Pseudomonadaceae</taxon>
        <taxon>Pseudomonas</taxon>
    </lineage>
</organism>
<evidence type="ECO:0000255" key="1">
    <source>
        <dbReference type="HAMAP-Rule" id="MF_01661"/>
    </source>
</evidence>
<keyword id="KW-0119">Carbohydrate metabolism</keyword>
<keyword id="KW-0963">Cytoplasm</keyword>
<keyword id="KW-0413">Isomerase</keyword>
<gene>
    <name evidence="1" type="primary">rbsD</name>
    <name type="ordered locus">PFL_2106</name>
</gene>
<name>RBSD_PSEF5</name>
<proteinExistence type="inferred from homology"/>
<protein>
    <recommendedName>
        <fullName evidence="1">D-ribose pyranase</fullName>
        <ecNumber evidence="1">5.4.99.62</ecNumber>
    </recommendedName>
</protein>
<comment type="function">
    <text evidence="1">Catalyzes the interconversion of beta-pyran and beta-furan forms of D-ribose.</text>
</comment>
<comment type="catalytic activity">
    <reaction evidence="1">
        <text>beta-D-ribopyranose = beta-D-ribofuranose</text>
        <dbReference type="Rhea" id="RHEA:25432"/>
        <dbReference type="ChEBI" id="CHEBI:27476"/>
        <dbReference type="ChEBI" id="CHEBI:47002"/>
        <dbReference type="EC" id="5.4.99.62"/>
    </reaction>
</comment>
<comment type="pathway">
    <text evidence="1">Carbohydrate metabolism; D-ribose degradation; D-ribose 5-phosphate from beta-D-ribopyranose: step 1/2.</text>
</comment>
<comment type="subunit">
    <text evidence="1">Homodecamer.</text>
</comment>
<comment type="subcellular location">
    <subcellularLocation>
        <location evidence="1">Cytoplasm</location>
    </subcellularLocation>
</comment>
<comment type="similarity">
    <text evidence="1">Belongs to the RbsD / FucU family. RbsD subfamily.</text>
</comment>
<sequence>MKKTPLLNIALSRLIASLGHGDIVVIGDAGLPVPPGVELIDLALTHGVPDFLTTLKVLLSEMQVERHVLAEEILLKQPTPLAALEGMTAGGELGQRQLMNHEDFKVLSRQARAVIRTGECQPYCNIALIAGVTF</sequence>
<reference key="1">
    <citation type="journal article" date="2005" name="Nat. Biotechnol.">
        <title>Complete genome sequence of the plant commensal Pseudomonas fluorescens Pf-5.</title>
        <authorList>
            <person name="Paulsen I.T."/>
            <person name="Press C.M."/>
            <person name="Ravel J."/>
            <person name="Kobayashi D.Y."/>
            <person name="Myers G.S.A."/>
            <person name="Mavrodi D.V."/>
            <person name="DeBoy R.T."/>
            <person name="Seshadri R."/>
            <person name="Ren Q."/>
            <person name="Madupu R."/>
            <person name="Dodson R.J."/>
            <person name="Durkin A.S."/>
            <person name="Brinkac L.M."/>
            <person name="Daugherty S.C."/>
            <person name="Sullivan S.A."/>
            <person name="Rosovitz M.J."/>
            <person name="Gwinn M.L."/>
            <person name="Zhou L."/>
            <person name="Schneider D.J."/>
            <person name="Cartinhour S.W."/>
            <person name="Nelson W.C."/>
            <person name="Weidman J."/>
            <person name="Watkins K."/>
            <person name="Tran K."/>
            <person name="Khouri H."/>
            <person name="Pierson E.A."/>
            <person name="Pierson L.S. III"/>
            <person name="Thomashow L.S."/>
            <person name="Loper J.E."/>
        </authorList>
    </citation>
    <scope>NUCLEOTIDE SEQUENCE [LARGE SCALE GENOMIC DNA]</scope>
    <source>
        <strain>ATCC BAA-477 / NRRL B-23932 / Pf-5</strain>
    </source>
</reference>